<feature type="signal peptide" evidence="1">
    <location>
        <begin position="1"/>
        <end position="16"/>
    </location>
</feature>
<feature type="chain" id="PRO_0000446771" description="U-scoloptoxin(11)-Sm3a" evidence="3">
    <location>
        <begin position="17"/>
        <end position="239"/>
    </location>
</feature>
<name>TXB3A_SCOMO</name>
<sequence length="239" mass="27427">MINFLLLVLILSVLESQENVHTDELPKCMFGNNVCAKLQKNFQGTYLQQLCICEDEVCVKMLKNTNRTIAEPLCSRQTCSTSWRSDSHSKSATQGDNQYQFCSDIRNEFTKTCTVNQNAYKEATITTIATNKKEILHHYYCYCPPEFKYVYSTTNRVVNDTHKVESKFFKCEAIPSCNGDEVCKIAVERTNSYTVSKHCLCYNDKICPDDPKEAFSNKTQNDGSTYYEFKCPDLTICIE</sequence>
<reference key="1">
    <citation type="journal article" date="2014" name="Mol. Biol. Evol.">
        <title>Clawing through evolution: toxin diversification and convergence in the ancient lineage Chilopoda (centipedes).</title>
        <authorList>
            <person name="Undheim E.A."/>
            <person name="Jones A."/>
            <person name="Clauser K.R."/>
            <person name="Holland J.W."/>
            <person name="Pineda S.S."/>
            <person name="King G.F."/>
            <person name="Fry B.G."/>
        </authorList>
    </citation>
    <scope>NUCLEOTIDE SEQUENCE [MRNA]</scope>
    <scope>NOMENCLATURE</scope>
    <source>
        <tissue>Venom gland</tissue>
    </source>
</reference>
<organism>
    <name type="scientific">Scolopendra morsitans</name>
    <name type="common">Tanzanian blue ringleg centipede</name>
    <dbReference type="NCBI Taxonomy" id="943129"/>
    <lineage>
        <taxon>Eukaryota</taxon>
        <taxon>Metazoa</taxon>
        <taxon>Ecdysozoa</taxon>
        <taxon>Arthropoda</taxon>
        <taxon>Myriapoda</taxon>
        <taxon>Chilopoda</taxon>
        <taxon>Pleurostigmophora</taxon>
        <taxon>Scolopendromorpha</taxon>
        <taxon>Scolopendridae</taxon>
        <taxon>Scolopendra</taxon>
    </lineage>
</organism>
<dbReference type="GO" id="GO:0005576">
    <property type="term" value="C:extracellular region"/>
    <property type="evidence" value="ECO:0007669"/>
    <property type="project" value="UniProtKB-SubCell"/>
</dbReference>
<dbReference type="GO" id="GO:0090729">
    <property type="term" value="F:toxin activity"/>
    <property type="evidence" value="ECO:0007669"/>
    <property type="project" value="UniProtKB-KW"/>
</dbReference>
<dbReference type="Gene3D" id="2.20.20.160">
    <property type="match status" value="1"/>
</dbReference>
<protein>
    <recommendedName>
        <fullName evidence="2">U-scoloptoxin(11)-Sm3a</fullName>
        <shortName evidence="2">U-SLPTX(11)-Sm3a</shortName>
    </recommendedName>
</protein>
<comment type="subcellular location">
    <subcellularLocation>
        <location evidence="4">Secreted</location>
    </subcellularLocation>
</comment>
<comment type="tissue specificity">
    <text evidence="4">Expressed by the venom gland.</text>
</comment>
<comment type="PTM">
    <text evidence="3">Contains 9 disulfide bonds.</text>
</comment>
<comment type="similarity">
    <text evidence="3">Belongs to the scoloptoxin-11 family.</text>
</comment>
<comment type="caution">
    <text evidence="4">All S.morsitans family members described in 'Undeheim et al., 2014' have not been imported into UniProtKB. Please, refer to this paper to access them.</text>
</comment>
<comment type="online information" name="National Center for Biotechnology Information (NCBI)">
    <link uri="https://www.ncbi.nlm.nih.gov/nuccore/GASH01000125"/>
</comment>
<accession>P0DPZ8</accession>
<proteinExistence type="evidence at transcript level"/>
<evidence type="ECO:0000255" key="1"/>
<evidence type="ECO:0000303" key="2">
    <source>
    </source>
</evidence>
<evidence type="ECO:0000305" key="3"/>
<evidence type="ECO:0000305" key="4">
    <source>
    </source>
</evidence>
<keyword id="KW-1015">Disulfide bond</keyword>
<keyword id="KW-0964">Secreted</keyword>
<keyword id="KW-0732">Signal</keyword>
<keyword id="KW-0800">Toxin</keyword>